<evidence type="ECO:0000250" key="1"/>
<evidence type="ECO:0000305" key="2"/>
<keyword id="KW-0963">Cytoplasm</keyword>
<keyword id="KW-0251">Elongation factor</keyword>
<keyword id="KW-0648">Protein biosynthesis</keyword>
<keyword id="KW-1185">Reference proteome</keyword>
<name>EFTS_ECO57</name>
<organism>
    <name type="scientific">Escherichia coli O157:H7</name>
    <dbReference type="NCBI Taxonomy" id="83334"/>
    <lineage>
        <taxon>Bacteria</taxon>
        <taxon>Pseudomonadati</taxon>
        <taxon>Pseudomonadota</taxon>
        <taxon>Gammaproteobacteria</taxon>
        <taxon>Enterobacterales</taxon>
        <taxon>Enterobacteriaceae</taxon>
        <taxon>Escherichia</taxon>
    </lineage>
</organism>
<reference key="1">
    <citation type="journal article" date="2001" name="Nature">
        <title>Genome sequence of enterohaemorrhagic Escherichia coli O157:H7.</title>
        <authorList>
            <person name="Perna N.T."/>
            <person name="Plunkett G. III"/>
            <person name="Burland V."/>
            <person name="Mau B."/>
            <person name="Glasner J.D."/>
            <person name="Rose D.J."/>
            <person name="Mayhew G.F."/>
            <person name="Evans P.S."/>
            <person name="Gregor J."/>
            <person name="Kirkpatrick H.A."/>
            <person name="Posfai G."/>
            <person name="Hackett J."/>
            <person name="Klink S."/>
            <person name="Boutin A."/>
            <person name="Shao Y."/>
            <person name="Miller L."/>
            <person name="Grotbeck E.J."/>
            <person name="Davis N.W."/>
            <person name="Lim A."/>
            <person name="Dimalanta E.T."/>
            <person name="Potamousis K."/>
            <person name="Apodaca J."/>
            <person name="Anantharaman T.S."/>
            <person name="Lin J."/>
            <person name="Yen G."/>
            <person name="Schwartz D.C."/>
            <person name="Welch R.A."/>
            <person name="Blattner F.R."/>
        </authorList>
    </citation>
    <scope>NUCLEOTIDE SEQUENCE [LARGE SCALE GENOMIC DNA]</scope>
    <source>
        <strain>O157:H7 / EDL933 / ATCC 700927 / EHEC</strain>
    </source>
</reference>
<reference key="2">
    <citation type="journal article" date="2001" name="DNA Res.">
        <title>Complete genome sequence of enterohemorrhagic Escherichia coli O157:H7 and genomic comparison with a laboratory strain K-12.</title>
        <authorList>
            <person name="Hayashi T."/>
            <person name="Makino K."/>
            <person name="Ohnishi M."/>
            <person name="Kurokawa K."/>
            <person name="Ishii K."/>
            <person name="Yokoyama K."/>
            <person name="Han C.-G."/>
            <person name="Ohtsubo E."/>
            <person name="Nakayama K."/>
            <person name="Murata T."/>
            <person name="Tanaka M."/>
            <person name="Tobe T."/>
            <person name="Iida T."/>
            <person name="Takami H."/>
            <person name="Honda T."/>
            <person name="Sasakawa C."/>
            <person name="Ogasawara N."/>
            <person name="Yasunaga T."/>
            <person name="Kuhara S."/>
            <person name="Shiba T."/>
            <person name="Hattori M."/>
            <person name="Shinagawa H."/>
        </authorList>
    </citation>
    <scope>NUCLEOTIDE SEQUENCE [LARGE SCALE GENOMIC DNA]</scope>
    <source>
        <strain>O157:H7 / Sakai / RIMD 0509952 / EHEC</strain>
    </source>
</reference>
<proteinExistence type="inferred from homology"/>
<sequence>MAEITASLVKELRERTGAGMMDCKKALTEANGDIELAIENMRKSGAIKAAKKAGNVAADGVIKTKIDGNYGIILEVNCQTDFVAKDAGFQAFADKVLDAAVAGKITDVEVLKAQFEEERVALVAKIGENINIRRVAALEGDVLGSYQHGARIGVLVAAKGADEELVKHIAMHVAASKPEFIKPEDVSAEVVEKEYQVQLDIAMQSGKPKEIAEKMVEGRMKKFTGEVSLTGQPFVMEPSKTVGQLLKEHNAEVTGFIRFEVGEGIEKVETDFAAEVAAMSKQS</sequence>
<dbReference type="EMBL" id="AE005174">
    <property type="protein sequence ID" value="AAG54472.1"/>
    <property type="molecule type" value="Genomic_DNA"/>
</dbReference>
<dbReference type="EMBL" id="BA000007">
    <property type="protein sequence ID" value="BAB33595.1"/>
    <property type="molecule type" value="Genomic_DNA"/>
</dbReference>
<dbReference type="PIR" id="D85501">
    <property type="entry name" value="D85501"/>
</dbReference>
<dbReference type="PIR" id="D90650">
    <property type="entry name" value="D90650"/>
</dbReference>
<dbReference type="RefSeq" id="NP_308199.1">
    <property type="nucleotide sequence ID" value="NC_002695.1"/>
</dbReference>
<dbReference type="RefSeq" id="WP_000818114.1">
    <property type="nucleotide sequence ID" value="NZ_VOAI01000002.1"/>
</dbReference>
<dbReference type="SMR" id="P0A6P3"/>
<dbReference type="STRING" id="155864.Z0181"/>
<dbReference type="GeneID" id="913854"/>
<dbReference type="GeneID" id="93777255"/>
<dbReference type="KEGG" id="ece:Z0181"/>
<dbReference type="KEGG" id="ecs:ECs_0172"/>
<dbReference type="PATRIC" id="fig|386585.9.peg.274"/>
<dbReference type="eggNOG" id="COG0264">
    <property type="taxonomic scope" value="Bacteria"/>
</dbReference>
<dbReference type="HOGENOM" id="CLU_047155_0_2_6"/>
<dbReference type="OMA" id="DAGMMDC"/>
<dbReference type="Proteomes" id="UP000000558">
    <property type="component" value="Chromosome"/>
</dbReference>
<dbReference type="Proteomes" id="UP000002519">
    <property type="component" value="Chromosome"/>
</dbReference>
<dbReference type="GO" id="GO:0005737">
    <property type="term" value="C:cytoplasm"/>
    <property type="evidence" value="ECO:0007669"/>
    <property type="project" value="UniProtKB-SubCell"/>
</dbReference>
<dbReference type="GO" id="GO:0003746">
    <property type="term" value="F:translation elongation factor activity"/>
    <property type="evidence" value="ECO:0007669"/>
    <property type="project" value="UniProtKB-UniRule"/>
</dbReference>
<dbReference type="CDD" id="cd14275">
    <property type="entry name" value="UBA_EF-Ts"/>
    <property type="match status" value="1"/>
</dbReference>
<dbReference type="FunFam" id="1.10.286.20:FF:000001">
    <property type="entry name" value="Elongation factor Ts"/>
    <property type="match status" value="1"/>
</dbReference>
<dbReference type="FunFam" id="1.10.8.10:FF:000001">
    <property type="entry name" value="Elongation factor Ts"/>
    <property type="match status" value="1"/>
</dbReference>
<dbReference type="FunFam" id="3.30.479.20:FF:000001">
    <property type="entry name" value="Elongation factor Ts"/>
    <property type="match status" value="1"/>
</dbReference>
<dbReference type="Gene3D" id="1.10.286.20">
    <property type="match status" value="1"/>
</dbReference>
<dbReference type="Gene3D" id="1.10.8.10">
    <property type="entry name" value="DNA helicase RuvA subunit, C-terminal domain"/>
    <property type="match status" value="1"/>
</dbReference>
<dbReference type="Gene3D" id="3.30.479.20">
    <property type="entry name" value="Elongation factor Ts, dimerisation domain"/>
    <property type="match status" value="2"/>
</dbReference>
<dbReference type="HAMAP" id="MF_00050">
    <property type="entry name" value="EF_Ts"/>
    <property type="match status" value="1"/>
</dbReference>
<dbReference type="InterPro" id="IPR036402">
    <property type="entry name" value="EF-Ts_dimer_sf"/>
</dbReference>
<dbReference type="InterPro" id="IPR001816">
    <property type="entry name" value="Transl_elong_EFTs/EF1B"/>
</dbReference>
<dbReference type="InterPro" id="IPR014039">
    <property type="entry name" value="Transl_elong_EFTs/EF1B_dimer"/>
</dbReference>
<dbReference type="InterPro" id="IPR018101">
    <property type="entry name" value="Transl_elong_Ts_CS"/>
</dbReference>
<dbReference type="InterPro" id="IPR009060">
    <property type="entry name" value="UBA-like_sf"/>
</dbReference>
<dbReference type="NCBIfam" id="TIGR00116">
    <property type="entry name" value="tsf"/>
    <property type="match status" value="1"/>
</dbReference>
<dbReference type="PANTHER" id="PTHR11741">
    <property type="entry name" value="ELONGATION FACTOR TS"/>
    <property type="match status" value="1"/>
</dbReference>
<dbReference type="PANTHER" id="PTHR11741:SF0">
    <property type="entry name" value="ELONGATION FACTOR TS, MITOCHONDRIAL"/>
    <property type="match status" value="1"/>
</dbReference>
<dbReference type="Pfam" id="PF00889">
    <property type="entry name" value="EF_TS"/>
    <property type="match status" value="1"/>
</dbReference>
<dbReference type="SUPFAM" id="SSF54713">
    <property type="entry name" value="Elongation factor Ts (EF-Ts), dimerisation domain"/>
    <property type="match status" value="2"/>
</dbReference>
<dbReference type="SUPFAM" id="SSF46934">
    <property type="entry name" value="UBA-like"/>
    <property type="match status" value="1"/>
</dbReference>
<dbReference type="PROSITE" id="PS01126">
    <property type="entry name" value="EF_TS_1"/>
    <property type="match status" value="1"/>
</dbReference>
<dbReference type="PROSITE" id="PS01127">
    <property type="entry name" value="EF_TS_2"/>
    <property type="match status" value="1"/>
</dbReference>
<comment type="function">
    <text evidence="1">Associates with the EF-Tu.GDP complex and induces the exchange of GDP to GTP. It remains bound to the aminoacyl-tRNA.EF-Tu.GTP complex up to the GTP hydrolysis stage on the ribosome (By similarity).</text>
</comment>
<comment type="subunit">
    <text evidence="1">Heterotetramer composed of two EF-Ts.EF-Tu dimer complexes.</text>
</comment>
<comment type="subcellular location">
    <subcellularLocation>
        <location evidence="1">Cytoplasm</location>
    </subcellularLocation>
</comment>
<comment type="similarity">
    <text evidence="2">Belongs to the EF-Ts family.</text>
</comment>
<gene>
    <name type="primary">tsf</name>
    <name type="ordered locus">Z0181</name>
    <name type="ordered locus">ECs0172</name>
</gene>
<accession>P0A6P3</accession>
<accession>P02997</accession>
<protein>
    <recommendedName>
        <fullName>Elongation factor Ts</fullName>
        <shortName>EF-Ts</shortName>
    </recommendedName>
</protein>
<feature type="initiator methionine" description="Removed" evidence="1">
    <location>
        <position position="1"/>
    </location>
</feature>
<feature type="chain" id="PRO_0000161119" description="Elongation factor Ts">
    <location>
        <begin position="2"/>
        <end position="283"/>
    </location>
</feature>
<feature type="region of interest" description="Involved in Mg(2+) ion dislocation from EF-Tu">
    <location>
        <begin position="80"/>
        <end position="83"/>
    </location>
</feature>